<organism>
    <name type="scientific">Mycobacterium tuberculosis (strain ATCC 25177 / H37Ra)</name>
    <dbReference type="NCBI Taxonomy" id="419947"/>
    <lineage>
        <taxon>Bacteria</taxon>
        <taxon>Bacillati</taxon>
        <taxon>Actinomycetota</taxon>
        <taxon>Actinomycetes</taxon>
        <taxon>Mycobacteriales</taxon>
        <taxon>Mycobacteriaceae</taxon>
        <taxon>Mycobacterium</taxon>
        <taxon>Mycobacterium tuberculosis complex</taxon>
    </lineage>
</organism>
<evidence type="ECO:0000250" key="1"/>
<evidence type="ECO:0000255" key="2"/>
<evidence type="ECO:0000305" key="3"/>
<name>A85B_MYCTA</name>
<proteinExistence type="inferred from homology"/>
<accession>A5U3Q3</accession>
<accession>P31952</accession>
<accession>Q9RMI0</accession>
<comment type="function">
    <text evidence="1">The antigen 85 proteins (FbpA, FbpB, FbpC) are responsible for the high affinity of mycobacteria for fibronectin, a large adhesive glycoprotein, which facilitates the attachment of M.tuberculosis to murine alveolar macrophages (AMs). They also help to maintain the integrity of the cell wall by catalyzing the transfer of mycolic acids to cell wall arabinogalactan and through the synthesis of alpha,alpha-trehalose dimycolate (TDM, cord factor). They catalyze the transfer of a mycoloyl residue from one molecule of alpha,alpha-trehalose monomycolate (TMM) to another TMM, leading to the formation of TDM (By similarity).</text>
</comment>
<comment type="catalytic activity">
    <reaction>
        <text>2 alpha,alpha'-trehalose 6-mycolate = alpha,alpha'-trehalose 6,6'-bismycolate + alpha,alpha-trehalose</text>
        <dbReference type="Rhea" id="RHEA:23472"/>
        <dbReference type="ChEBI" id="CHEBI:16551"/>
        <dbReference type="ChEBI" id="CHEBI:18195"/>
        <dbReference type="ChEBI" id="CHEBI:18234"/>
        <dbReference type="EC" id="2.3.1.122"/>
    </reaction>
</comment>
<comment type="catalytic activity">
    <reaction>
        <text>an acyl-CoA + a 1,2-diacyl-sn-glycerol = a triacyl-sn-glycerol + CoA</text>
        <dbReference type="Rhea" id="RHEA:10868"/>
        <dbReference type="ChEBI" id="CHEBI:17815"/>
        <dbReference type="ChEBI" id="CHEBI:57287"/>
        <dbReference type="ChEBI" id="CHEBI:58342"/>
        <dbReference type="ChEBI" id="CHEBI:64615"/>
        <dbReference type="EC" id="2.3.1.20"/>
    </reaction>
</comment>
<comment type="subcellular location">
    <subcellularLocation>
        <location evidence="1">Secreted</location>
    </subcellularLocation>
</comment>
<comment type="similarity">
    <text evidence="3">Belongs to the mycobacterial A85 antigen family.</text>
</comment>
<keyword id="KW-0012">Acyltransferase</keyword>
<keyword id="KW-1015">Disulfide bond</keyword>
<keyword id="KW-1185">Reference proteome</keyword>
<keyword id="KW-0964">Secreted</keyword>
<keyword id="KW-0732">Signal</keyword>
<keyword id="KW-0808">Transferase</keyword>
<gene>
    <name type="primary">fbpB</name>
    <name type="ordered locus">MRA_1897</name>
</gene>
<dbReference type="EC" id="2.3.1.122"/>
<dbReference type="EC" id="2.3.1.20"/>
<dbReference type="EMBL" id="CP000611">
    <property type="protein sequence ID" value="ABQ73653.1"/>
    <property type="molecule type" value="Genomic_DNA"/>
</dbReference>
<dbReference type="EMBL" id="AF198032">
    <property type="protein sequence ID" value="AAF13448.1"/>
    <property type="molecule type" value="Genomic_DNA"/>
</dbReference>
<dbReference type="RefSeq" id="WP_003409456.1">
    <property type="nucleotide sequence ID" value="NZ_CP016972.1"/>
</dbReference>
<dbReference type="SMR" id="A5U3Q3"/>
<dbReference type="ESTHER" id="myctu-a85b">
    <property type="family name" value="A85-Mycolyl-transferase"/>
</dbReference>
<dbReference type="GeneID" id="45425859"/>
<dbReference type="KEGG" id="mra:MRA_1897"/>
<dbReference type="eggNOG" id="COG0627">
    <property type="taxonomic scope" value="Bacteria"/>
</dbReference>
<dbReference type="HOGENOM" id="CLU_026624_3_1_11"/>
<dbReference type="Proteomes" id="UP000001988">
    <property type="component" value="Chromosome"/>
</dbReference>
<dbReference type="GO" id="GO:0005576">
    <property type="term" value="C:extracellular region"/>
    <property type="evidence" value="ECO:0007669"/>
    <property type="project" value="UniProtKB-SubCell"/>
</dbReference>
<dbReference type="GO" id="GO:0004144">
    <property type="term" value="F:diacylglycerol O-acyltransferase activity"/>
    <property type="evidence" value="ECO:0007669"/>
    <property type="project" value="UniProtKB-EC"/>
</dbReference>
<dbReference type="GO" id="GO:0050348">
    <property type="term" value="F:trehalose O-mycolyltransferase activity"/>
    <property type="evidence" value="ECO:0007669"/>
    <property type="project" value="UniProtKB-EC"/>
</dbReference>
<dbReference type="FunFam" id="3.40.50.1820:FF:000086">
    <property type="entry name" value="Diacylglycerol acyltransferase/mycolyltransferase Ag85C"/>
    <property type="match status" value="1"/>
</dbReference>
<dbReference type="Gene3D" id="3.40.50.1820">
    <property type="entry name" value="alpha/beta hydrolase"/>
    <property type="match status" value="1"/>
</dbReference>
<dbReference type="InterPro" id="IPR029058">
    <property type="entry name" value="AB_hydrolase_fold"/>
</dbReference>
<dbReference type="InterPro" id="IPR000801">
    <property type="entry name" value="Esterase-like"/>
</dbReference>
<dbReference type="InterPro" id="IPR050583">
    <property type="entry name" value="Mycobacterial_A85_antigen"/>
</dbReference>
<dbReference type="PANTHER" id="PTHR48098:SF1">
    <property type="entry name" value="DIACYLGLYCEROL ACYLTRANSFERASE_MYCOLYLTRANSFERASE AG85A"/>
    <property type="match status" value="1"/>
</dbReference>
<dbReference type="PANTHER" id="PTHR48098">
    <property type="entry name" value="ENTEROCHELIN ESTERASE-RELATED"/>
    <property type="match status" value="1"/>
</dbReference>
<dbReference type="Pfam" id="PF00756">
    <property type="entry name" value="Esterase"/>
    <property type="match status" value="1"/>
</dbReference>
<dbReference type="SUPFAM" id="SSF53474">
    <property type="entry name" value="alpha/beta-Hydrolases"/>
    <property type="match status" value="1"/>
</dbReference>
<protein>
    <recommendedName>
        <fullName>Diacylglycerol acyltransferase/mycolyltransferase Ag85B</fullName>
        <shortName>DGAT</shortName>
        <ecNumber>2.3.1.122</ecNumber>
        <ecNumber>2.3.1.20</ecNumber>
    </recommendedName>
    <alternativeName>
        <fullName>30 kDa extracellular protein</fullName>
    </alternativeName>
    <alternativeName>
        <fullName>Acyl-CoA:diacylglycerol acyltransferase</fullName>
    </alternativeName>
    <alternativeName>
        <fullName>Antigen 85 complex B</fullName>
        <shortName>85B</shortName>
        <shortName>Ag85B</shortName>
    </alternativeName>
    <alternativeName>
        <fullName>Extracellular alpha-antigen</fullName>
    </alternativeName>
    <alternativeName>
        <fullName>Fibronectin-binding protein B</fullName>
        <shortName>Fbps B</shortName>
    </alternativeName>
</protein>
<sequence length="325" mass="34581">MTDVSRKIRAWGRRLMIGTAAAVVLPGLVGLAGGAATAGAFSRPGLPVEYLQVPSPSMGRDIKVQFQSGGNNSPAVYLLDGLRAQDDYNGWDINTPAFEWYYQSGLSIVMPVGGQSSFYSDWYSPACGKAGCQTYKWETFLTSELPQWLSANRAVKPTGSAAIGLSMAGSSAMILAAYHPQQFIYAGSLSALLDPSQGMGPSLIGLAMGDAGGYKAADMWGPSSDPAWERNDPTQQIPKLVANNTRLWVYCGNGTPNELGGANIPAEFLENFVRSSNLKFQDAYNAAGGHNAVFNFPPNGTHSWEYWGAQLNAMKGDLQSSLGAG</sequence>
<reference key="1">
    <citation type="journal article" date="2008" name="PLoS ONE">
        <title>Genetic basis of virulence attenuation revealed by comparative genomic analysis of Mycobacterium tuberculosis strain H37Ra versus H37Rv.</title>
        <authorList>
            <person name="Zheng H."/>
            <person name="Lu L."/>
            <person name="Wang B."/>
            <person name="Pu S."/>
            <person name="Zhang X."/>
            <person name="Zhu G."/>
            <person name="Shi W."/>
            <person name="Zhang L."/>
            <person name="Wang H."/>
            <person name="Wang S."/>
            <person name="Zhao G."/>
            <person name="Zhang Y."/>
        </authorList>
    </citation>
    <scope>NUCLEOTIDE SEQUENCE [LARGE SCALE GENOMIC DNA]</scope>
    <source>
        <strain>ATCC 25177 / H37Ra</strain>
    </source>
</reference>
<reference key="2">
    <citation type="journal article" date="2000" name="Xi Bao Yu Fen Zi Mian Yi Xue Za Zhi">
        <title>Cloning of Ag85B gene of Mycobacterium tuberculosis and its construction of eukaryotic expression vector.</title>
        <authorList>
            <person name="Fan X.-L."/>
            <person name="Xu Z.H.K."/>
            <person name="Bai G.-C.H."/>
            <person name="Li Y."/>
        </authorList>
    </citation>
    <scope>NUCLEOTIDE SEQUENCE [GENOMIC DNA] OF 41-325</scope>
</reference>
<feature type="signal peptide" evidence="2">
    <location>
        <begin position="1"/>
        <end position="40"/>
    </location>
</feature>
<feature type="chain" id="PRO_0000300058" description="Diacylglycerol acyltransferase/mycolyltransferase Ag85B">
    <location>
        <begin position="41"/>
        <end position="325"/>
    </location>
</feature>
<feature type="region of interest" description="Fibronectin-binding" evidence="1">
    <location>
        <begin position="98"/>
        <end position="108"/>
    </location>
</feature>
<feature type="active site" description="Nucleophile" evidence="1">
    <location>
        <position position="166"/>
    </location>
</feature>
<feature type="active site" evidence="1">
    <location>
        <position position="270"/>
    </location>
</feature>
<feature type="active site" evidence="1">
    <location>
        <position position="302"/>
    </location>
</feature>
<feature type="binding site" evidence="1">
    <location>
        <begin position="82"/>
        <end position="83"/>
    </location>
    <ligand>
        <name>substrate</name>
    </ligand>
</feature>
<feature type="binding site" evidence="1">
    <location>
        <position position="166"/>
    </location>
    <ligand>
        <name>substrate</name>
    </ligand>
</feature>
<feature type="binding site" evidence="1">
    <location>
        <position position="194"/>
    </location>
    <ligand>
        <name>substrate</name>
    </ligand>
</feature>
<feature type="binding site" evidence="1">
    <location>
        <begin position="272"/>
        <end position="275"/>
    </location>
    <ligand>
        <name>substrate</name>
    </ligand>
</feature>
<feature type="binding site" evidence="1">
    <location>
        <position position="279"/>
    </location>
    <ligand>
        <name>substrate</name>
    </ligand>
</feature>
<feature type="binding site" evidence="1">
    <location>
        <begin position="302"/>
        <end position="304"/>
    </location>
    <ligand>
        <name>substrate</name>
    </ligand>
</feature>
<feature type="disulfide bond" evidence="1">
    <location>
        <begin position="127"/>
        <end position="132"/>
    </location>
</feature>